<keyword id="KW-0256">Endoplasmic reticulum</keyword>
<keyword id="KW-0472">Membrane</keyword>
<keyword id="KW-0597">Phosphoprotein</keyword>
<keyword id="KW-1185">Reference proteome</keyword>
<keyword id="KW-0812">Transmembrane</keyword>
<keyword id="KW-1133">Transmembrane helix</keyword>
<name>YJD2_SCHPO</name>
<feature type="chain" id="PRO_0000372345" description="Uncharacterized protein C594.02c">
    <location>
        <begin position="1"/>
        <end position="489"/>
    </location>
</feature>
<feature type="transmembrane region" description="Helical" evidence="1">
    <location>
        <begin position="63"/>
        <end position="83"/>
    </location>
</feature>
<feature type="transmembrane region" description="Helical" evidence="1">
    <location>
        <begin position="182"/>
        <end position="202"/>
    </location>
</feature>
<feature type="transmembrane region" description="Helical" evidence="1">
    <location>
        <begin position="221"/>
        <end position="241"/>
    </location>
</feature>
<feature type="region of interest" description="Disordered" evidence="2">
    <location>
        <begin position="260"/>
        <end position="312"/>
    </location>
</feature>
<feature type="region of interest" description="Disordered" evidence="2">
    <location>
        <begin position="401"/>
        <end position="435"/>
    </location>
</feature>
<feature type="region of interest" description="Disordered" evidence="2">
    <location>
        <begin position="450"/>
        <end position="489"/>
    </location>
</feature>
<feature type="compositionally biased region" description="Polar residues" evidence="2">
    <location>
        <begin position="268"/>
        <end position="282"/>
    </location>
</feature>
<feature type="compositionally biased region" description="Polar residues" evidence="2">
    <location>
        <begin position="450"/>
        <end position="465"/>
    </location>
</feature>
<feature type="compositionally biased region" description="Low complexity" evidence="2">
    <location>
        <begin position="477"/>
        <end position="489"/>
    </location>
</feature>
<feature type="modified residue" description="Phosphothreonine" evidence="4">
    <location>
        <position position="26"/>
    </location>
</feature>
<feature type="modified residue" description="Phosphoserine" evidence="4">
    <location>
        <position position="27"/>
    </location>
</feature>
<feature type="modified residue" description="Phosphoserine" evidence="4">
    <location>
        <position position="263"/>
    </location>
</feature>
<sequence>MAPAVFTSDYWKKYFSNKKKPTVKNTSDIDLLHINRGRQPFDEGLSINEDSFFYRHNIHVPRIVYLIIVACGSFIITGGIEFAIAYGMYKKTETSVRLWRLPDTLSGDAAVTNFVQAIVTYWVESILVQGDLRSGLVKPIYFGWWPENFLLREVLRAKPRYHFKFIVFRWMEWLVFVGLRGLVWSVPLWFLFWPATVGILCAPGRHEGNDYYFNNYPAPQVFKLIFGGGEGFVLTPWIAFLHMYMYGHYLHVAKNQKSLPKTSDLEQQRGTSSSQPSENDANITALPKPEPKMYENSDLTPARTPVTPAPLEKPVNLAPEVVEPTNAAASPLQLNAPKLTDVDDSALAYDPTKVQDGEDRFVHNDVPLENAENPSRFVHSDAPIDMTHTTTVISEAQNLPSTLLPQDGNAVHHDTDAPSLSNVRKSVDSPRVPPSFSDDAVSSFSLVTAPSINNVGGSTAPSVNNQEREYDYDDTSSRSSTLTERPVVH</sequence>
<gene>
    <name type="ORF">SPCC594.02c</name>
</gene>
<protein>
    <recommendedName>
        <fullName>Uncharacterized protein C594.02c</fullName>
    </recommendedName>
</protein>
<evidence type="ECO:0000255" key="1"/>
<evidence type="ECO:0000256" key="2">
    <source>
        <dbReference type="SAM" id="MobiDB-lite"/>
    </source>
</evidence>
<evidence type="ECO:0000269" key="3">
    <source>
    </source>
</evidence>
<evidence type="ECO:0000269" key="4">
    <source>
    </source>
</evidence>
<dbReference type="EMBL" id="CU329672">
    <property type="protein sequence ID" value="CAA20661.1"/>
    <property type="molecule type" value="Genomic_DNA"/>
</dbReference>
<dbReference type="PIR" id="T41446">
    <property type="entry name" value="T41446"/>
</dbReference>
<dbReference type="RefSeq" id="NP_587788.1">
    <property type="nucleotide sequence ID" value="NM_001022781.2"/>
</dbReference>
<dbReference type="BioGRID" id="275572">
    <property type="interactions" value="2"/>
</dbReference>
<dbReference type="STRING" id="284812.O74505"/>
<dbReference type="iPTMnet" id="O74505"/>
<dbReference type="PaxDb" id="4896-SPCC594.02c.1"/>
<dbReference type="EnsemblFungi" id="SPCC594.02c.1">
    <property type="protein sequence ID" value="SPCC594.02c.1:pep"/>
    <property type="gene ID" value="SPCC594.02c"/>
</dbReference>
<dbReference type="KEGG" id="spo:2538998"/>
<dbReference type="PomBase" id="SPCC594.02c"/>
<dbReference type="VEuPathDB" id="FungiDB:SPCC594.02c"/>
<dbReference type="eggNOG" id="ENOG502S4IY">
    <property type="taxonomic scope" value="Eukaryota"/>
</dbReference>
<dbReference type="HOGENOM" id="CLU_557961_0_0_1"/>
<dbReference type="InParanoid" id="O74505"/>
<dbReference type="PRO" id="PR:O74505"/>
<dbReference type="Proteomes" id="UP000002485">
    <property type="component" value="Chromosome III"/>
</dbReference>
<dbReference type="GO" id="GO:0005783">
    <property type="term" value="C:endoplasmic reticulum"/>
    <property type="evidence" value="ECO:0007005"/>
    <property type="project" value="PomBase"/>
</dbReference>
<dbReference type="GO" id="GO:0005789">
    <property type="term" value="C:endoplasmic reticulum membrane"/>
    <property type="evidence" value="ECO:0007669"/>
    <property type="project" value="UniProtKB-SubCell"/>
</dbReference>
<dbReference type="InterPro" id="IPR018852">
    <property type="entry name" value="DUF2456"/>
</dbReference>
<dbReference type="PANTHER" id="PTHR28297">
    <property type="entry name" value="FUNGAL PROTEIN"/>
    <property type="match status" value="1"/>
</dbReference>
<dbReference type="PANTHER" id="PTHR28297:SF1">
    <property type="entry name" value="FUNGAL PROTEIN"/>
    <property type="match status" value="1"/>
</dbReference>
<dbReference type="Pfam" id="PF10445">
    <property type="entry name" value="DUF2456"/>
    <property type="match status" value="1"/>
</dbReference>
<proteinExistence type="evidence at protein level"/>
<organism>
    <name type="scientific">Schizosaccharomyces pombe (strain 972 / ATCC 24843)</name>
    <name type="common">Fission yeast</name>
    <dbReference type="NCBI Taxonomy" id="284812"/>
    <lineage>
        <taxon>Eukaryota</taxon>
        <taxon>Fungi</taxon>
        <taxon>Dikarya</taxon>
        <taxon>Ascomycota</taxon>
        <taxon>Taphrinomycotina</taxon>
        <taxon>Schizosaccharomycetes</taxon>
        <taxon>Schizosaccharomycetales</taxon>
        <taxon>Schizosaccharomycetaceae</taxon>
        <taxon>Schizosaccharomyces</taxon>
    </lineage>
</organism>
<accession>O74505</accession>
<comment type="subcellular location">
    <subcellularLocation>
        <location evidence="3">Endoplasmic reticulum membrane</location>
        <topology evidence="3">Multi-pass membrane protein</topology>
    </subcellularLocation>
</comment>
<reference key="1">
    <citation type="journal article" date="2002" name="Nature">
        <title>The genome sequence of Schizosaccharomyces pombe.</title>
        <authorList>
            <person name="Wood V."/>
            <person name="Gwilliam R."/>
            <person name="Rajandream M.A."/>
            <person name="Lyne M.H."/>
            <person name="Lyne R."/>
            <person name="Stewart A."/>
            <person name="Sgouros J.G."/>
            <person name="Peat N."/>
            <person name="Hayles J."/>
            <person name="Baker S.G."/>
            <person name="Basham D."/>
            <person name="Bowman S."/>
            <person name="Brooks K."/>
            <person name="Brown D."/>
            <person name="Brown S."/>
            <person name="Chillingworth T."/>
            <person name="Churcher C.M."/>
            <person name="Collins M."/>
            <person name="Connor R."/>
            <person name="Cronin A."/>
            <person name="Davis P."/>
            <person name="Feltwell T."/>
            <person name="Fraser A."/>
            <person name="Gentles S."/>
            <person name="Goble A."/>
            <person name="Hamlin N."/>
            <person name="Harris D.E."/>
            <person name="Hidalgo J."/>
            <person name="Hodgson G."/>
            <person name="Holroyd S."/>
            <person name="Hornsby T."/>
            <person name="Howarth S."/>
            <person name="Huckle E.J."/>
            <person name="Hunt S."/>
            <person name="Jagels K."/>
            <person name="James K.D."/>
            <person name="Jones L."/>
            <person name="Jones M."/>
            <person name="Leather S."/>
            <person name="McDonald S."/>
            <person name="McLean J."/>
            <person name="Mooney P."/>
            <person name="Moule S."/>
            <person name="Mungall K.L."/>
            <person name="Murphy L.D."/>
            <person name="Niblett D."/>
            <person name="Odell C."/>
            <person name="Oliver K."/>
            <person name="O'Neil S."/>
            <person name="Pearson D."/>
            <person name="Quail M.A."/>
            <person name="Rabbinowitsch E."/>
            <person name="Rutherford K.M."/>
            <person name="Rutter S."/>
            <person name="Saunders D."/>
            <person name="Seeger K."/>
            <person name="Sharp S."/>
            <person name="Skelton J."/>
            <person name="Simmonds M.N."/>
            <person name="Squares R."/>
            <person name="Squares S."/>
            <person name="Stevens K."/>
            <person name="Taylor K."/>
            <person name="Taylor R.G."/>
            <person name="Tivey A."/>
            <person name="Walsh S.V."/>
            <person name="Warren T."/>
            <person name="Whitehead S."/>
            <person name="Woodward J.R."/>
            <person name="Volckaert G."/>
            <person name="Aert R."/>
            <person name="Robben J."/>
            <person name="Grymonprez B."/>
            <person name="Weltjens I."/>
            <person name="Vanstreels E."/>
            <person name="Rieger M."/>
            <person name="Schaefer M."/>
            <person name="Mueller-Auer S."/>
            <person name="Gabel C."/>
            <person name="Fuchs M."/>
            <person name="Duesterhoeft A."/>
            <person name="Fritzc C."/>
            <person name="Holzer E."/>
            <person name="Moestl D."/>
            <person name="Hilbert H."/>
            <person name="Borzym K."/>
            <person name="Langer I."/>
            <person name="Beck A."/>
            <person name="Lehrach H."/>
            <person name="Reinhardt R."/>
            <person name="Pohl T.M."/>
            <person name="Eger P."/>
            <person name="Zimmermann W."/>
            <person name="Wedler H."/>
            <person name="Wambutt R."/>
            <person name="Purnelle B."/>
            <person name="Goffeau A."/>
            <person name="Cadieu E."/>
            <person name="Dreano S."/>
            <person name="Gloux S."/>
            <person name="Lelaure V."/>
            <person name="Mottier S."/>
            <person name="Galibert F."/>
            <person name="Aves S.J."/>
            <person name="Xiang Z."/>
            <person name="Hunt C."/>
            <person name="Moore K."/>
            <person name="Hurst S.M."/>
            <person name="Lucas M."/>
            <person name="Rochet M."/>
            <person name="Gaillardin C."/>
            <person name="Tallada V.A."/>
            <person name="Garzon A."/>
            <person name="Thode G."/>
            <person name="Daga R.R."/>
            <person name="Cruzado L."/>
            <person name="Jimenez J."/>
            <person name="Sanchez M."/>
            <person name="del Rey F."/>
            <person name="Benito J."/>
            <person name="Dominguez A."/>
            <person name="Revuelta J.L."/>
            <person name="Moreno S."/>
            <person name="Armstrong J."/>
            <person name="Forsburg S.L."/>
            <person name="Cerutti L."/>
            <person name="Lowe T."/>
            <person name="McCombie W.R."/>
            <person name="Paulsen I."/>
            <person name="Potashkin J."/>
            <person name="Shpakovski G.V."/>
            <person name="Ussery D."/>
            <person name="Barrell B.G."/>
            <person name="Nurse P."/>
        </authorList>
    </citation>
    <scope>NUCLEOTIDE SEQUENCE [LARGE SCALE GENOMIC DNA]</scope>
    <source>
        <strain>972 / ATCC 24843</strain>
    </source>
</reference>
<reference key="2">
    <citation type="journal article" date="2006" name="Nat. Biotechnol.">
        <title>ORFeome cloning and global analysis of protein localization in the fission yeast Schizosaccharomyces pombe.</title>
        <authorList>
            <person name="Matsuyama A."/>
            <person name="Arai R."/>
            <person name="Yashiroda Y."/>
            <person name="Shirai A."/>
            <person name="Kamata A."/>
            <person name="Sekido S."/>
            <person name="Kobayashi Y."/>
            <person name="Hashimoto A."/>
            <person name="Hamamoto M."/>
            <person name="Hiraoka Y."/>
            <person name="Horinouchi S."/>
            <person name="Yoshida M."/>
        </authorList>
    </citation>
    <scope>SUBCELLULAR LOCATION [LARGE SCALE ANALYSIS]</scope>
</reference>
<reference key="3">
    <citation type="journal article" date="2008" name="J. Proteome Res.">
        <title>Phosphoproteome analysis of fission yeast.</title>
        <authorList>
            <person name="Wilson-Grady J.T."/>
            <person name="Villen J."/>
            <person name="Gygi S.P."/>
        </authorList>
    </citation>
    <scope>PHOSPHORYLATION [LARGE SCALE ANALYSIS] AT THR-26; SER-27 AND SER-263</scope>
    <scope>IDENTIFICATION BY MASS SPECTROMETRY</scope>
</reference>